<dbReference type="EC" id="3.6.5.3" evidence="2"/>
<dbReference type="EMBL" id="CP001217">
    <property type="protein sequence ID" value="ACJ08322.1"/>
    <property type="molecule type" value="Genomic_DNA"/>
</dbReference>
<dbReference type="SMR" id="B6JN44"/>
<dbReference type="KEGG" id="hpp:HPP12_1170"/>
<dbReference type="HOGENOM" id="CLU_007265_0_1_7"/>
<dbReference type="Proteomes" id="UP000008198">
    <property type="component" value="Chromosome"/>
</dbReference>
<dbReference type="GO" id="GO:0005829">
    <property type="term" value="C:cytosol"/>
    <property type="evidence" value="ECO:0007669"/>
    <property type="project" value="TreeGrafter"/>
</dbReference>
<dbReference type="GO" id="GO:0005525">
    <property type="term" value="F:GTP binding"/>
    <property type="evidence" value="ECO:0007669"/>
    <property type="project" value="UniProtKB-UniRule"/>
</dbReference>
<dbReference type="GO" id="GO:0003924">
    <property type="term" value="F:GTPase activity"/>
    <property type="evidence" value="ECO:0007669"/>
    <property type="project" value="InterPro"/>
</dbReference>
<dbReference type="GO" id="GO:0003746">
    <property type="term" value="F:translation elongation factor activity"/>
    <property type="evidence" value="ECO:0007669"/>
    <property type="project" value="UniProtKB-UniRule"/>
</dbReference>
<dbReference type="CDD" id="cd01884">
    <property type="entry name" value="EF_Tu"/>
    <property type="match status" value="1"/>
</dbReference>
<dbReference type="CDD" id="cd03697">
    <property type="entry name" value="EFTU_II"/>
    <property type="match status" value="1"/>
</dbReference>
<dbReference type="CDD" id="cd03707">
    <property type="entry name" value="EFTU_III"/>
    <property type="match status" value="1"/>
</dbReference>
<dbReference type="FunFam" id="2.40.30.10:FF:000001">
    <property type="entry name" value="Elongation factor Tu"/>
    <property type="match status" value="1"/>
</dbReference>
<dbReference type="FunFam" id="3.40.50.300:FF:000003">
    <property type="entry name" value="Elongation factor Tu"/>
    <property type="match status" value="1"/>
</dbReference>
<dbReference type="Gene3D" id="3.40.50.300">
    <property type="entry name" value="P-loop containing nucleotide triphosphate hydrolases"/>
    <property type="match status" value="1"/>
</dbReference>
<dbReference type="Gene3D" id="2.40.30.10">
    <property type="entry name" value="Translation factors"/>
    <property type="match status" value="2"/>
</dbReference>
<dbReference type="HAMAP" id="MF_00118_B">
    <property type="entry name" value="EF_Tu_B"/>
    <property type="match status" value="1"/>
</dbReference>
<dbReference type="InterPro" id="IPR041709">
    <property type="entry name" value="EF-Tu_GTP-bd"/>
</dbReference>
<dbReference type="InterPro" id="IPR050055">
    <property type="entry name" value="EF-Tu_GTPase"/>
</dbReference>
<dbReference type="InterPro" id="IPR004161">
    <property type="entry name" value="EFTu-like_2"/>
</dbReference>
<dbReference type="InterPro" id="IPR033720">
    <property type="entry name" value="EFTU_2"/>
</dbReference>
<dbReference type="InterPro" id="IPR031157">
    <property type="entry name" value="G_TR_CS"/>
</dbReference>
<dbReference type="InterPro" id="IPR027417">
    <property type="entry name" value="P-loop_NTPase"/>
</dbReference>
<dbReference type="InterPro" id="IPR005225">
    <property type="entry name" value="Small_GTP-bd"/>
</dbReference>
<dbReference type="InterPro" id="IPR000795">
    <property type="entry name" value="T_Tr_GTP-bd_dom"/>
</dbReference>
<dbReference type="InterPro" id="IPR009000">
    <property type="entry name" value="Transl_B-barrel_sf"/>
</dbReference>
<dbReference type="InterPro" id="IPR009001">
    <property type="entry name" value="Transl_elong_EF1A/Init_IF2_C"/>
</dbReference>
<dbReference type="InterPro" id="IPR004541">
    <property type="entry name" value="Transl_elong_EFTu/EF1A_bac/org"/>
</dbReference>
<dbReference type="InterPro" id="IPR004160">
    <property type="entry name" value="Transl_elong_EFTu/EF1A_C"/>
</dbReference>
<dbReference type="NCBIfam" id="TIGR00485">
    <property type="entry name" value="EF-Tu"/>
    <property type="match status" value="1"/>
</dbReference>
<dbReference type="NCBIfam" id="NF000766">
    <property type="entry name" value="PRK00049.1"/>
    <property type="match status" value="1"/>
</dbReference>
<dbReference type="NCBIfam" id="NF009372">
    <property type="entry name" value="PRK12735.1"/>
    <property type="match status" value="1"/>
</dbReference>
<dbReference type="NCBIfam" id="NF009373">
    <property type="entry name" value="PRK12736.1"/>
    <property type="match status" value="1"/>
</dbReference>
<dbReference type="NCBIfam" id="TIGR00231">
    <property type="entry name" value="small_GTP"/>
    <property type="match status" value="1"/>
</dbReference>
<dbReference type="PANTHER" id="PTHR43721:SF22">
    <property type="entry name" value="ELONGATION FACTOR TU, MITOCHONDRIAL"/>
    <property type="match status" value="1"/>
</dbReference>
<dbReference type="PANTHER" id="PTHR43721">
    <property type="entry name" value="ELONGATION FACTOR TU-RELATED"/>
    <property type="match status" value="1"/>
</dbReference>
<dbReference type="Pfam" id="PF00009">
    <property type="entry name" value="GTP_EFTU"/>
    <property type="match status" value="1"/>
</dbReference>
<dbReference type="Pfam" id="PF03144">
    <property type="entry name" value="GTP_EFTU_D2"/>
    <property type="match status" value="1"/>
</dbReference>
<dbReference type="Pfam" id="PF03143">
    <property type="entry name" value="GTP_EFTU_D3"/>
    <property type="match status" value="1"/>
</dbReference>
<dbReference type="PRINTS" id="PR00315">
    <property type="entry name" value="ELONGATNFCT"/>
</dbReference>
<dbReference type="SUPFAM" id="SSF50465">
    <property type="entry name" value="EF-Tu/eEF-1alpha/eIF2-gamma C-terminal domain"/>
    <property type="match status" value="1"/>
</dbReference>
<dbReference type="SUPFAM" id="SSF52540">
    <property type="entry name" value="P-loop containing nucleoside triphosphate hydrolases"/>
    <property type="match status" value="1"/>
</dbReference>
<dbReference type="SUPFAM" id="SSF50447">
    <property type="entry name" value="Translation proteins"/>
    <property type="match status" value="1"/>
</dbReference>
<dbReference type="PROSITE" id="PS00301">
    <property type="entry name" value="G_TR_1"/>
    <property type="match status" value="1"/>
</dbReference>
<dbReference type="PROSITE" id="PS51722">
    <property type="entry name" value="G_TR_2"/>
    <property type="match status" value="1"/>
</dbReference>
<organism>
    <name type="scientific">Helicobacter pylori (strain P12)</name>
    <dbReference type="NCBI Taxonomy" id="570508"/>
    <lineage>
        <taxon>Bacteria</taxon>
        <taxon>Pseudomonadati</taxon>
        <taxon>Campylobacterota</taxon>
        <taxon>Epsilonproteobacteria</taxon>
        <taxon>Campylobacterales</taxon>
        <taxon>Helicobacteraceae</taxon>
        <taxon>Helicobacter</taxon>
    </lineage>
</organism>
<feature type="chain" id="PRO_1000095065" description="Elongation factor Tu">
    <location>
        <begin position="1"/>
        <end position="399"/>
    </location>
</feature>
<feature type="domain" description="tr-type G">
    <location>
        <begin position="10"/>
        <end position="209"/>
    </location>
</feature>
<feature type="region of interest" description="G1" evidence="1">
    <location>
        <begin position="19"/>
        <end position="26"/>
    </location>
</feature>
<feature type="region of interest" description="G2" evidence="1">
    <location>
        <begin position="60"/>
        <end position="64"/>
    </location>
</feature>
<feature type="region of interest" description="G3" evidence="1">
    <location>
        <begin position="81"/>
        <end position="84"/>
    </location>
</feature>
<feature type="region of interest" description="G4" evidence="1">
    <location>
        <begin position="136"/>
        <end position="139"/>
    </location>
</feature>
<feature type="region of interest" description="G5" evidence="1">
    <location>
        <begin position="174"/>
        <end position="176"/>
    </location>
</feature>
<feature type="binding site" evidence="2">
    <location>
        <begin position="19"/>
        <end position="26"/>
    </location>
    <ligand>
        <name>GTP</name>
        <dbReference type="ChEBI" id="CHEBI:37565"/>
    </ligand>
</feature>
<feature type="binding site" evidence="2">
    <location>
        <position position="26"/>
    </location>
    <ligand>
        <name>Mg(2+)</name>
        <dbReference type="ChEBI" id="CHEBI:18420"/>
    </ligand>
</feature>
<feature type="binding site" evidence="2">
    <location>
        <begin position="81"/>
        <end position="85"/>
    </location>
    <ligand>
        <name>GTP</name>
        <dbReference type="ChEBI" id="CHEBI:37565"/>
    </ligand>
</feature>
<feature type="binding site" evidence="2">
    <location>
        <begin position="136"/>
        <end position="139"/>
    </location>
    <ligand>
        <name>GTP</name>
        <dbReference type="ChEBI" id="CHEBI:37565"/>
    </ligand>
</feature>
<sequence>MAKEKFNRTKPHVNIGTIGHVDHGKTTLSAAISAVLSLKGLAEMKDYDNIDNAPEEKERGITIATSHIEYETENRHYAHVDCPGHADYVKNMITGAAQMDGAILVVSAADGPMPQTREHILLSRQVGVPHIVVFLNKQDMVDDQELLELVEMEVRELLSAYEFPGDDTPIIAGSALRALKKAKAGNVGEWGEKVLKLMAEVDAYIPTPKRDTEKTFLMPVEDVFSIAGRGTVVTGRIERGVVKVGDEVEIVGIRATQKTTVTGVEMFRKELEKGEAGDNVGVLLRGTKKEEVERGMVLCKPGSITPHKKFEGEIYVLSKEEGGRHTPFFTNYRPQFYVRTTDVTGSITLPEGVEMVMPGDNVKITVELISPVALELGTKFAIREGGRTVGAGVVSNIIE</sequence>
<reference key="1">
    <citation type="submission" date="2008-10" db="EMBL/GenBank/DDBJ databases">
        <title>The complete genome sequence of Helicobacter pylori strain P12.</title>
        <authorList>
            <person name="Fischer W."/>
            <person name="Windhager L."/>
            <person name="Karnholz A."/>
            <person name="Zeiller M."/>
            <person name="Zimmer R."/>
            <person name="Haas R."/>
        </authorList>
    </citation>
    <scope>NUCLEOTIDE SEQUENCE [LARGE SCALE GENOMIC DNA]</scope>
    <source>
        <strain>P12</strain>
    </source>
</reference>
<gene>
    <name evidence="2" type="primary">tuf</name>
    <name type="ordered locus">HPP12_1170</name>
</gene>
<accession>B6JN44</accession>
<keyword id="KW-0963">Cytoplasm</keyword>
<keyword id="KW-0251">Elongation factor</keyword>
<keyword id="KW-0342">GTP-binding</keyword>
<keyword id="KW-0378">Hydrolase</keyword>
<keyword id="KW-0460">Magnesium</keyword>
<keyword id="KW-0479">Metal-binding</keyword>
<keyword id="KW-0547">Nucleotide-binding</keyword>
<keyword id="KW-0648">Protein biosynthesis</keyword>
<proteinExistence type="inferred from homology"/>
<evidence type="ECO:0000250" key="1"/>
<evidence type="ECO:0000255" key="2">
    <source>
        <dbReference type="HAMAP-Rule" id="MF_00118"/>
    </source>
</evidence>
<protein>
    <recommendedName>
        <fullName evidence="2">Elongation factor Tu</fullName>
        <shortName evidence="2">EF-Tu</shortName>
        <ecNumber evidence="2">3.6.5.3</ecNumber>
    </recommendedName>
</protein>
<name>EFTU_HELP2</name>
<comment type="function">
    <text evidence="2">GTP hydrolase that promotes the GTP-dependent binding of aminoacyl-tRNA to the A-site of ribosomes during protein biosynthesis.</text>
</comment>
<comment type="catalytic activity">
    <reaction evidence="2">
        <text>GTP + H2O = GDP + phosphate + H(+)</text>
        <dbReference type="Rhea" id="RHEA:19669"/>
        <dbReference type="ChEBI" id="CHEBI:15377"/>
        <dbReference type="ChEBI" id="CHEBI:15378"/>
        <dbReference type="ChEBI" id="CHEBI:37565"/>
        <dbReference type="ChEBI" id="CHEBI:43474"/>
        <dbReference type="ChEBI" id="CHEBI:58189"/>
        <dbReference type="EC" id="3.6.5.3"/>
    </reaction>
    <physiologicalReaction direction="left-to-right" evidence="2">
        <dbReference type="Rhea" id="RHEA:19670"/>
    </physiologicalReaction>
</comment>
<comment type="subunit">
    <text evidence="2">Monomer.</text>
</comment>
<comment type="subcellular location">
    <subcellularLocation>
        <location evidence="2">Cytoplasm</location>
    </subcellularLocation>
</comment>
<comment type="similarity">
    <text evidence="2">Belongs to the TRAFAC class translation factor GTPase superfamily. Classic translation factor GTPase family. EF-Tu/EF-1A subfamily.</text>
</comment>